<evidence type="ECO:0000255" key="1">
    <source>
        <dbReference type="HAMAP-Rule" id="MF_01864"/>
    </source>
</evidence>
<evidence type="ECO:0000255" key="2">
    <source>
        <dbReference type="PROSITE-ProRule" id="PRU01266"/>
    </source>
</evidence>
<evidence type="ECO:0000256" key="3">
    <source>
        <dbReference type="SAM" id="MobiDB-lite"/>
    </source>
</evidence>
<proteinExistence type="inferred from homology"/>
<feature type="chain" id="PRO_0000374566" description="tRNA-2-methylthio-N(6)-dimethylallyladenosine synthase">
    <location>
        <begin position="1"/>
        <end position="514"/>
    </location>
</feature>
<feature type="domain" description="MTTase N-terminal" evidence="1">
    <location>
        <begin position="68"/>
        <end position="186"/>
    </location>
</feature>
<feature type="domain" description="Radical SAM core" evidence="2">
    <location>
        <begin position="209"/>
        <end position="440"/>
    </location>
</feature>
<feature type="domain" description="TRAM" evidence="1">
    <location>
        <begin position="442"/>
        <end position="505"/>
    </location>
</feature>
<feature type="region of interest" description="Disordered" evidence="3">
    <location>
        <begin position="1"/>
        <end position="21"/>
    </location>
</feature>
<feature type="binding site" evidence="1">
    <location>
        <position position="77"/>
    </location>
    <ligand>
        <name>[4Fe-4S] cluster</name>
        <dbReference type="ChEBI" id="CHEBI:49883"/>
        <label>1</label>
    </ligand>
</feature>
<feature type="binding site" evidence="1">
    <location>
        <position position="113"/>
    </location>
    <ligand>
        <name>[4Fe-4S] cluster</name>
        <dbReference type="ChEBI" id="CHEBI:49883"/>
        <label>1</label>
    </ligand>
</feature>
<feature type="binding site" evidence="1">
    <location>
        <position position="147"/>
    </location>
    <ligand>
        <name>[4Fe-4S] cluster</name>
        <dbReference type="ChEBI" id="CHEBI:49883"/>
        <label>1</label>
    </ligand>
</feature>
<feature type="binding site" evidence="1">
    <location>
        <position position="223"/>
    </location>
    <ligand>
        <name>[4Fe-4S] cluster</name>
        <dbReference type="ChEBI" id="CHEBI:49883"/>
        <label>2</label>
        <note>4Fe-4S-S-AdoMet</note>
    </ligand>
</feature>
<feature type="binding site" evidence="1">
    <location>
        <position position="227"/>
    </location>
    <ligand>
        <name>[4Fe-4S] cluster</name>
        <dbReference type="ChEBI" id="CHEBI:49883"/>
        <label>2</label>
        <note>4Fe-4S-S-AdoMet</note>
    </ligand>
</feature>
<feature type="binding site" evidence="1">
    <location>
        <position position="230"/>
    </location>
    <ligand>
        <name>[4Fe-4S] cluster</name>
        <dbReference type="ChEBI" id="CHEBI:49883"/>
        <label>2</label>
        <note>4Fe-4S-S-AdoMet</note>
    </ligand>
</feature>
<organism>
    <name type="scientific">Staphylococcus aureus (strain JH1)</name>
    <dbReference type="NCBI Taxonomy" id="359787"/>
    <lineage>
        <taxon>Bacteria</taxon>
        <taxon>Bacillati</taxon>
        <taxon>Bacillota</taxon>
        <taxon>Bacilli</taxon>
        <taxon>Bacillales</taxon>
        <taxon>Staphylococcaceae</taxon>
        <taxon>Staphylococcus</taxon>
    </lineage>
</organism>
<sequence>MNEEQRKASSVDVLAERDKKAEKDYSKYFEHVYQPPNLKEAKKRGKQEVRYNRDFQIDEKYRGMGNERTFLIKTYGCQMNAHDTEVIAGILEALGYQATTDINTADVILINTCAIRENAENKVFSEIGNLKHLKKERPDILIGVCGCMSQEESVVNKILKSYQNVDMIFGTHNIHHLPEILEEAYLSKAMVVEVWSKEGDVIENLPKVREGNIKAWVNIMYGCDKFCTYCIVPFTRGKERSRRPEDIIDEVRELAREGYKEITLLGQNVNSYGKDLQDIEYDLGDLLQAISKIAIPRVRFTTSHPWDFTDHMIDVISEGGNIVPHIHLPVQSGNNAVLKIMGRKYTRESYLDLVKRIKDRIPNVALTTDIIVGYPNESEEQFEETLTLYDEVGFEHAYTYLYSQRDGTPAAKMKDNVPLNVKKERLQRLNKKVGHYSQIAMSKYEGQTVTVLCEGSSKKDDQVLAGYTDKNKLVNFKAPKEMIGKLVEVRIDEAKQYSLNGSFVKEVEPEMVIQ</sequence>
<protein>
    <recommendedName>
        <fullName evidence="1">tRNA-2-methylthio-N(6)-dimethylallyladenosine synthase</fullName>
        <ecNumber evidence="1">2.8.4.3</ecNumber>
    </recommendedName>
    <alternativeName>
        <fullName evidence="1">(Dimethylallyl)adenosine tRNA methylthiotransferase MiaB</fullName>
    </alternativeName>
    <alternativeName>
        <fullName evidence="1">tRNA-i(6)A37 methylthiotransferase</fullName>
    </alternativeName>
</protein>
<reference key="1">
    <citation type="submission" date="2007-06" db="EMBL/GenBank/DDBJ databases">
        <title>Complete sequence of chromosome of Staphylococcus aureus subsp. aureus JH1.</title>
        <authorList>
            <consortium name="US DOE Joint Genome Institute"/>
            <person name="Copeland A."/>
            <person name="Lucas S."/>
            <person name="Lapidus A."/>
            <person name="Barry K."/>
            <person name="Detter J.C."/>
            <person name="Glavina del Rio T."/>
            <person name="Hammon N."/>
            <person name="Israni S."/>
            <person name="Dalin E."/>
            <person name="Tice H."/>
            <person name="Pitluck S."/>
            <person name="Chain P."/>
            <person name="Malfatti S."/>
            <person name="Shin M."/>
            <person name="Vergez L."/>
            <person name="Schmutz J."/>
            <person name="Larimer F."/>
            <person name="Land M."/>
            <person name="Hauser L."/>
            <person name="Kyrpides N."/>
            <person name="Ivanova N."/>
            <person name="Tomasz A."/>
            <person name="Richardson P."/>
        </authorList>
    </citation>
    <scope>NUCLEOTIDE SEQUENCE [LARGE SCALE GENOMIC DNA]</scope>
    <source>
        <strain>JH1</strain>
    </source>
</reference>
<dbReference type="EC" id="2.8.4.3" evidence="1"/>
<dbReference type="EMBL" id="CP000736">
    <property type="protein sequence ID" value="ABR52229.1"/>
    <property type="molecule type" value="Genomic_DNA"/>
</dbReference>
<dbReference type="SMR" id="A6U1B1"/>
<dbReference type="KEGG" id="sah:SaurJH1_1378"/>
<dbReference type="HOGENOM" id="CLU_018697_2_0_9"/>
<dbReference type="GO" id="GO:0005829">
    <property type="term" value="C:cytosol"/>
    <property type="evidence" value="ECO:0007669"/>
    <property type="project" value="TreeGrafter"/>
</dbReference>
<dbReference type="GO" id="GO:0051539">
    <property type="term" value="F:4 iron, 4 sulfur cluster binding"/>
    <property type="evidence" value="ECO:0007669"/>
    <property type="project" value="UniProtKB-UniRule"/>
</dbReference>
<dbReference type="GO" id="GO:0046872">
    <property type="term" value="F:metal ion binding"/>
    <property type="evidence" value="ECO:0007669"/>
    <property type="project" value="UniProtKB-KW"/>
</dbReference>
<dbReference type="GO" id="GO:0035597">
    <property type="term" value="F:N6-isopentenyladenosine methylthiotransferase activity"/>
    <property type="evidence" value="ECO:0007669"/>
    <property type="project" value="TreeGrafter"/>
</dbReference>
<dbReference type="CDD" id="cd01335">
    <property type="entry name" value="Radical_SAM"/>
    <property type="match status" value="1"/>
</dbReference>
<dbReference type="FunFam" id="3.40.50.12160:FF:000006">
    <property type="entry name" value="tRNA-2-methylthio-N(6)-dimethylallyladenosine synthase"/>
    <property type="match status" value="1"/>
</dbReference>
<dbReference type="FunFam" id="3.80.30.20:FF:000001">
    <property type="entry name" value="tRNA-2-methylthio-N(6)-dimethylallyladenosine synthase 2"/>
    <property type="match status" value="1"/>
</dbReference>
<dbReference type="Gene3D" id="3.40.50.12160">
    <property type="entry name" value="Methylthiotransferase, N-terminal domain"/>
    <property type="match status" value="1"/>
</dbReference>
<dbReference type="Gene3D" id="3.80.30.20">
    <property type="entry name" value="tm_1862 like domain"/>
    <property type="match status" value="1"/>
</dbReference>
<dbReference type="HAMAP" id="MF_01864">
    <property type="entry name" value="tRNA_metthiotr_MiaB"/>
    <property type="match status" value="1"/>
</dbReference>
<dbReference type="InterPro" id="IPR006638">
    <property type="entry name" value="Elp3/MiaA/NifB-like_rSAM"/>
</dbReference>
<dbReference type="InterPro" id="IPR005839">
    <property type="entry name" value="Methylthiotransferase"/>
</dbReference>
<dbReference type="InterPro" id="IPR020612">
    <property type="entry name" value="Methylthiotransferase_CS"/>
</dbReference>
<dbReference type="InterPro" id="IPR013848">
    <property type="entry name" value="Methylthiotransferase_N"/>
</dbReference>
<dbReference type="InterPro" id="IPR038135">
    <property type="entry name" value="Methylthiotransferase_N_sf"/>
</dbReference>
<dbReference type="InterPro" id="IPR006463">
    <property type="entry name" value="MiaB_methiolase"/>
</dbReference>
<dbReference type="InterPro" id="IPR007197">
    <property type="entry name" value="rSAM"/>
</dbReference>
<dbReference type="InterPro" id="IPR023404">
    <property type="entry name" value="rSAM_horseshoe"/>
</dbReference>
<dbReference type="InterPro" id="IPR002792">
    <property type="entry name" value="TRAM_dom"/>
</dbReference>
<dbReference type="NCBIfam" id="TIGR01574">
    <property type="entry name" value="miaB-methiolase"/>
    <property type="match status" value="1"/>
</dbReference>
<dbReference type="NCBIfam" id="TIGR00089">
    <property type="entry name" value="MiaB/RimO family radical SAM methylthiotransferase"/>
    <property type="match status" value="1"/>
</dbReference>
<dbReference type="PANTHER" id="PTHR43020">
    <property type="entry name" value="CDK5 REGULATORY SUBUNIT-ASSOCIATED PROTEIN 1"/>
    <property type="match status" value="1"/>
</dbReference>
<dbReference type="PANTHER" id="PTHR43020:SF2">
    <property type="entry name" value="MITOCHONDRIAL TRNA METHYLTHIOTRANSFERASE CDK5RAP1"/>
    <property type="match status" value="1"/>
</dbReference>
<dbReference type="Pfam" id="PF04055">
    <property type="entry name" value="Radical_SAM"/>
    <property type="match status" value="1"/>
</dbReference>
<dbReference type="Pfam" id="PF01938">
    <property type="entry name" value="TRAM"/>
    <property type="match status" value="1"/>
</dbReference>
<dbReference type="Pfam" id="PF00919">
    <property type="entry name" value="UPF0004"/>
    <property type="match status" value="1"/>
</dbReference>
<dbReference type="SFLD" id="SFLDF00273">
    <property type="entry name" value="(dimethylallyl)adenosine_tRNA"/>
    <property type="match status" value="1"/>
</dbReference>
<dbReference type="SFLD" id="SFLDG01082">
    <property type="entry name" value="B12-binding_domain_containing"/>
    <property type="match status" value="1"/>
</dbReference>
<dbReference type="SFLD" id="SFLDS00029">
    <property type="entry name" value="Radical_SAM"/>
    <property type="match status" value="1"/>
</dbReference>
<dbReference type="SMART" id="SM00729">
    <property type="entry name" value="Elp3"/>
    <property type="match status" value="1"/>
</dbReference>
<dbReference type="SUPFAM" id="SSF102114">
    <property type="entry name" value="Radical SAM enzymes"/>
    <property type="match status" value="1"/>
</dbReference>
<dbReference type="PROSITE" id="PS51449">
    <property type="entry name" value="MTTASE_N"/>
    <property type="match status" value="1"/>
</dbReference>
<dbReference type="PROSITE" id="PS01278">
    <property type="entry name" value="MTTASE_RADICAL"/>
    <property type="match status" value="1"/>
</dbReference>
<dbReference type="PROSITE" id="PS51918">
    <property type="entry name" value="RADICAL_SAM"/>
    <property type="match status" value="1"/>
</dbReference>
<dbReference type="PROSITE" id="PS50926">
    <property type="entry name" value="TRAM"/>
    <property type="match status" value="1"/>
</dbReference>
<name>MIAB_STAA2</name>
<accession>A6U1B1</accession>
<keyword id="KW-0004">4Fe-4S</keyword>
<keyword id="KW-0963">Cytoplasm</keyword>
<keyword id="KW-0408">Iron</keyword>
<keyword id="KW-0411">Iron-sulfur</keyword>
<keyword id="KW-0479">Metal-binding</keyword>
<keyword id="KW-0949">S-adenosyl-L-methionine</keyword>
<keyword id="KW-0808">Transferase</keyword>
<keyword id="KW-0819">tRNA processing</keyword>
<gene>
    <name evidence="1" type="primary">miaB</name>
    <name type="ordered locus">SaurJH1_1378</name>
</gene>
<comment type="function">
    <text evidence="1">Catalyzes the methylthiolation of N6-(dimethylallyl)adenosine (i(6)A), leading to the formation of 2-methylthio-N6-(dimethylallyl)adenosine (ms(2)i(6)A) at position 37 in tRNAs that read codons beginning with uridine.</text>
</comment>
<comment type="catalytic activity">
    <reaction evidence="1">
        <text>N(6)-dimethylallyladenosine(37) in tRNA + (sulfur carrier)-SH + AH2 + 2 S-adenosyl-L-methionine = 2-methylsulfanyl-N(6)-dimethylallyladenosine(37) in tRNA + (sulfur carrier)-H + 5'-deoxyadenosine + L-methionine + A + S-adenosyl-L-homocysteine + 2 H(+)</text>
        <dbReference type="Rhea" id="RHEA:37067"/>
        <dbReference type="Rhea" id="RHEA-COMP:10375"/>
        <dbReference type="Rhea" id="RHEA-COMP:10376"/>
        <dbReference type="Rhea" id="RHEA-COMP:14737"/>
        <dbReference type="Rhea" id="RHEA-COMP:14739"/>
        <dbReference type="ChEBI" id="CHEBI:13193"/>
        <dbReference type="ChEBI" id="CHEBI:15378"/>
        <dbReference type="ChEBI" id="CHEBI:17319"/>
        <dbReference type="ChEBI" id="CHEBI:17499"/>
        <dbReference type="ChEBI" id="CHEBI:29917"/>
        <dbReference type="ChEBI" id="CHEBI:57844"/>
        <dbReference type="ChEBI" id="CHEBI:57856"/>
        <dbReference type="ChEBI" id="CHEBI:59789"/>
        <dbReference type="ChEBI" id="CHEBI:64428"/>
        <dbReference type="ChEBI" id="CHEBI:74415"/>
        <dbReference type="ChEBI" id="CHEBI:74417"/>
        <dbReference type="EC" id="2.8.4.3"/>
    </reaction>
</comment>
<comment type="cofactor">
    <cofactor evidence="1">
        <name>[4Fe-4S] cluster</name>
        <dbReference type="ChEBI" id="CHEBI:49883"/>
    </cofactor>
    <text evidence="1">Binds 2 [4Fe-4S] clusters. One cluster is coordinated with 3 cysteines and an exchangeable S-adenosyl-L-methionine.</text>
</comment>
<comment type="subunit">
    <text evidence="1">Monomer.</text>
</comment>
<comment type="subcellular location">
    <subcellularLocation>
        <location evidence="1">Cytoplasm</location>
    </subcellularLocation>
</comment>
<comment type="similarity">
    <text evidence="1">Belongs to the methylthiotransferase family. MiaB subfamily.</text>
</comment>